<protein>
    <recommendedName>
        <fullName evidence="1">Homogentisate 1,2-dioxygenase</fullName>
        <shortName evidence="1">HGDO</shortName>
        <ecNumber evidence="1">1.13.11.5</ecNumber>
    </recommendedName>
    <alternativeName>
        <fullName evidence="1">Homogentisate oxygenase</fullName>
    </alternativeName>
    <alternativeName>
        <fullName evidence="1">Homogentisic acid oxidase</fullName>
    </alternativeName>
    <alternativeName>
        <fullName evidence="1">Homogentisicase</fullName>
    </alternativeName>
</protein>
<evidence type="ECO:0000255" key="1">
    <source>
        <dbReference type="HAMAP-Rule" id="MF_00334"/>
    </source>
</evidence>
<sequence>MDQTAIQAADAEAATANRLKYMPGFGNDFETESLPGALPQGQNSPQKCNYGLYAEQLSGSPFTAPRGTNERSWLYRIRPSVRHTRRFSNASYPLWKTAPCLDEHSLPLGQLRWDPIPAPEEKLTFLQGVRTMTTAGDAATQVGMSAHAYVFNEDMVDDYFFDADGELLIVPQLGAIRVFTEMGIMDVEPLEICLVPRGMMFKVMTTGEQTASRGYICENYGAKFTLPDRGPIGANCLANPRDFKTPVAAFEDKEKPCRVHVKWCGKFYVTEIGHSPLDVVAWHGNYAPYKYDLRTFSPVGAISFDHPDPSIFSVLTAPTEDAGTANVDFVIFPPRWLVAEHTFRPPWYHRNIMSEFMGLIHGQYDAKEEGFVPGGISLHNMMLPHGPDALAFEKASNVELKPVKLDHTMAFMFETRYPQQLTKYAAELETLQDDYLECWDGLERKFDGTPGIK</sequence>
<name>HGD_RHIEC</name>
<accession>Q2K9E5</accession>
<feature type="chain" id="PRO_1000019538" description="Homogentisate 1,2-dioxygenase">
    <location>
        <begin position="1"/>
        <end position="453"/>
    </location>
</feature>
<feature type="active site" description="Proton acceptor" evidence="1">
    <location>
        <position position="306"/>
    </location>
</feature>
<feature type="binding site" evidence="1">
    <location>
        <position position="349"/>
    </location>
    <ligand>
        <name>Fe cation</name>
        <dbReference type="ChEBI" id="CHEBI:24875"/>
    </ligand>
</feature>
<feature type="binding site" evidence="1">
    <location>
        <position position="355"/>
    </location>
    <ligand>
        <name>Fe cation</name>
        <dbReference type="ChEBI" id="CHEBI:24875"/>
    </ligand>
</feature>
<feature type="binding site" evidence="1">
    <location>
        <position position="364"/>
    </location>
    <ligand>
        <name>homogentisate</name>
        <dbReference type="ChEBI" id="CHEBI:16169"/>
    </ligand>
</feature>
<feature type="binding site" evidence="1">
    <location>
        <position position="385"/>
    </location>
    <ligand>
        <name>Fe cation</name>
        <dbReference type="ChEBI" id="CHEBI:24875"/>
    </ligand>
</feature>
<feature type="binding site" evidence="1">
    <location>
        <position position="385"/>
    </location>
    <ligand>
        <name>homogentisate</name>
        <dbReference type="ChEBI" id="CHEBI:16169"/>
    </ligand>
</feature>
<comment type="function">
    <text evidence="1">Involved in the catabolism of homogentisate (2,5-dihydroxyphenylacetate or 2,5-OH-PhAc), a central intermediate in the degradation of phenylalanine and tyrosine. Catalyzes the oxidative ring cleavage of the aromatic ring of homogentisate to yield maleylacetoacetate.</text>
</comment>
<comment type="catalytic activity">
    <reaction evidence="1">
        <text>homogentisate + O2 = 4-maleylacetoacetate + H(+)</text>
        <dbReference type="Rhea" id="RHEA:15449"/>
        <dbReference type="ChEBI" id="CHEBI:15378"/>
        <dbReference type="ChEBI" id="CHEBI:15379"/>
        <dbReference type="ChEBI" id="CHEBI:16169"/>
        <dbReference type="ChEBI" id="CHEBI:17105"/>
        <dbReference type="EC" id="1.13.11.5"/>
    </reaction>
</comment>
<comment type="cofactor">
    <cofactor evidence="1">
        <name>Fe cation</name>
        <dbReference type="ChEBI" id="CHEBI:24875"/>
    </cofactor>
</comment>
<comment type="pathway">
    <text evidence="1">Amino-acid degradation; L-phenylalanine degradation; acetoacetate and fumarate from L-phenylalanine: step 4/6.</text>
</comment>
<comment type="subunit">
    <text evidence="1">Hexamer; dimer of trimers.</text>
</comment>
<comment type="similarity">
    <text evidence="1">Belongs to the homogentisate dioxygenase family.</text>
</comment>
<organism>
    <name type="scientific">Rhizobium etli (strain ATCC 51251 / DSM 11541 / JCM 21823 / NBRC 15573 / CFN 42)</name>
    <dbReference type="NCBI Taxonomy" id="347834"/>
    <lineage>
        <taxon>Bacteria</taxon>
        <taxon>Pseudomonadati</taxon>
        <taxon>Pseudomonadota</taxon>
        <taxon>Alphaproteobacteria</taxon>
        <taxon>Hyphomicrobiales</taxon>
        <taxon>Rhizobiaceae</taxon>
        <taxon>Rhizobium/Agrobacterium group</taxon>
        <taxon>Rhizobium</taxon>
    </lineage>
</organism>
<reference key="1">
    <citation type="journal article" date="2006" name="Proc. Natl. Acad. Sci. U.S.A.">
        <title>The partitioned Rhizobium etli genome: genetic and metabolic redundancy in seven interacting replicons.</title>
        <authorList>
            <person name="Gonzalez V."/>
            <person name="Santamaria R.I."/>
            <person name="Bustos P."/>
            <person name="Hernandez-Gonzalez I."/>
            <person name="Medrano-Soto A."/>
            <person name="Moreno-Hagelsieb G."/>
            <person name="Janga S.C."/>
            <person name="Ramirez M.A."/>
            <person name="Jimenez-Jacinto V."/>
            <person name="Collado-Vides J."/>
            <person name="Davila G."/>
        </authorList>
    </citation>
    <scope>NUCLEOTIDE SEQUENCE [LARGE SCALE GENOMIC DNA]</scope>
    <source>
        <strain>ATCC 51251 / DSM 11541 / JCM 21823 / NBRC 15573 / CFN 42</strain>
    </source>
</reference>
<keyword id="KW-0223">Dioxygenase</keyword>
<keyword id="KW-0408">Iron</keyword>
<keyword id="KW-0479">Metal-binding</keyword>
<keyword id="KW-0560">Oxidoreductase</keyword>
<keyword id="KW-0585">Phenylalanine catabolism</keyword>
<keyword id="KW-1185">Reference proteome</keyword>
<keyword id="KW-0828">Tyrosine catabolism</keyword>
<proteinExistence type="inferred from homology"/>
<dbReference type="EC" id="1.13.11.5" evidence="1"/>
<dbReference type="EMBL" id="CP000133">
    <property type="protein sequence ID" value="ABC90541.1"/>
    <property type="molecule type" value="Genomic_DNA"/>
</dbReference>
<dbReference type="RefSeq" id="WP_011425039.1">
    <property type="nucleotide sequence ID" value="NC_007761.1"/>
</dbReference>
<dbReference type="SMR" id="Q2K9E5"/>
<dbReference type="KEGG" id="ret:RHE_CH01746"/>
<dbReference type="eggNOG" id="COG3508">
    <property type="taxonomic scope" value="Bacteria"/>
</dbReference>
<dbReference type="HOGENOM" id="CLU_027174_0_0_5"/>
<dbReference type="OrthoDB" id="9811253at2"/>
<dbReference type="UniPathway" id="UPA00139">
    <property type="reaction ID" value="UER00339"/>
</dbReference>
<dbReference type="Proteomes" id="UP000001936">
    <property type="component" value="Chromosome"/>
</dbReference>
<dbReference type="GO" id="GO:0005737">
    <property type="term" value="C:cytoplasm"/>
    <property type="evidence" value="ECO:0007669"/>
    <property type="project" value="TreeGrafter"/>
</dbReference>
<dbReference type="GO" id="GO:0004411">
    <property type="term" value="F:homogentisate 1,2-dioxygenase activity"/>
    <property type="evidence" value="ECO:0007669"/>
    <property type="project" value="UniProtKB-UniRule"/>
</dbReference>
<dbReference type="GO" id="GO:0005506">
    <property type="term" value="F:iron ion binding"/>
    <property type="evidence" value="ECO:0007669"/>
    <property type="project" value="UniProtKB-UniRule"/>
</dbReference>
<dbReference type="GO" id="GO:0006559">
    <property type="term" value="P:L-phenylalanine catabolic process"/>
    <property type="evidence" value="ECO:0007669"/>
    <property type="project" value="UniProtKB-UniRule"/>
</dbReference>
<dbReference type="GO" id="GO:0006572">
    <property type="term" value="P:tyrosine catabolic process"/>
    <property type="evidence" value="ECO:0007669"/>
    <property type="project" value="UniProtKB-UniRule"/>
</dbReference>
<dbReference type="CDD" id="cd07000">
    <property type="entry name" value="cupin_HGO_N"/>
    <property type="match status" value="1"/>
</dbReference>
<dbReference type="FunFam" id="2.60.120.10:FF:000053">
    <property type="entry name" value="Homogentisate 1,2-dioxygenase"/>
    <property type="match status" value="1"/>
</dbReference>
<dbReference type="Gene3D" id="2.60.120.10">
    <property type="entry name" value="Jelly Rolls"/>
    <property type="match status" value="1"/>
</dbReference>
<dbReference type="HAMAP" id="MF_00334">
    <property type="entry name" value="Homogentis_dioxygen"/>
    <property type="match status" value="1"/>
</dbReference>
<dbReference type="InterPro" id="IPR046451">
    <property type="entry name" value="HgmA_C"/>
</dbReference>
<dbReference type="InterPro" id="IPR046452">
    <property type="entry name" value="HgmA_N"/>
</dbReference>
<dbReference type="InterPro" id="IPR005708">
    <property type="entry name" value="Homogentis_dOase"/>
</dbReference>
<dbReference type="InterPro" id="IPR022950">
    <property type="entry name" value="Homogentis_dOase_bac"/>
</dbReference>
<dbReference type="InterPro" id="IPR014710">
    <property type="entry name" value="RmlC-like_jellyroll"/>
</dbReference>
<dbReference type="InterPro" id="IPR011051">
    <property type="entry name" value="RmlC_Cupin_sf"/>
</dbReference>
<dbReference type="NCBIfam" id="TIGR01015">
    <property type="entry name" value="hmgA"/>
    <property type="match status" value="1"/>
</dbReference>
<dbReference type="PANTHER" id="PTHR11056">
    <property type="entry name" value="HOMOGENTISATE 1,2-DIOXYGENASE"/>
    <property type="match status" value="1"/>
</dbReference>
<dbReference type="PANTHER" id="PTHR11056:SF0">
    <property type="entry name" value="HOMOGENTISATE 1,2-DIOXYGENASE"/>
    <property type="match status" value="1"/>
</dbReference>
<dbReference type="Pfam" id="PF04209">
    <property type="entry name" value="HgmA_C"/>
    <property type="match status" value="1"/>
</dbReference>
<dbReference type="Pfam" id="PF20510">
    <property type="entry name" value="HgmA_N"/>
    <property type="match status" value="1"/>
</dbReference>
<dbReference type="SUPFAM" id="SSF51182">
    <property type="entry name" value="RmlC-like cupins"/>
    <property type="match status" value="1"/>
</dbReference>
<gene>
    <name evidence="1" type="primary">hmgA</name>
    <name type="ordered locus">RHE_CH01746</name>
</gene>